<accession>Q4I650</accession>
<accession>A0A098DV52</accession>
<accession>A0A0E0SFM4</accession>
<accession>V6RHU8</accession>
<evidence type="ECO:0000250" key="1"/>
<evidence type="ECO:0000255" key="2">
    <source>
        <dbReference type="PROSITE-ProRule" id="PRU00610"/>
    </source>
</evidence>
<evidence type="ECO:0000256" key="3">
    <source>
        <dbReference type="SAM" id="MobiDB-lite"/>
    </source>
</evidence>
<evidence type="ECO:0000305" key="4"/>
<keyword id="KW-0010">Activator</keyword>
<keyword id="KW-0156">Chromatin regulator</keyword>
<keyword id="KW-0539">Nucleus</keyword>
<keyword id="KW-1185">Reference proteome</keyword>
<keyword id="KW-0804">Transcription</keyword>
<keyword id="KW-0805">Transcription regulation</keyword>
<reference key="1">
    <citation type="journal article" date="2007" name="Science">
        <title>The Fusarium graminearum genome reveals a link between localized polymorphism and pathogen specialization.</title>
        <authorList>
            <person name="Cuomo C.A."/>
            <person name="Gueldener U."/>
            <person name="Xu J.-R."/>
            <person name="Trail F."/>
            <person name="Turgeon B.G."/>
            <person name="Di Pietro A."/>
            <person name="Walton J.D."/>
            <person name="Ma L.-J."/>
            <person name="Baker S.E."/>
            <person name="Rep M."/>
            <person name="Adam G."/>
            <person name="Antoniw J."/>
            <person name="Baldwin T."/>
            <person name="Calvo S.E."/>
            <person name="Chang Y.-L."/>
            <person name="DeCaprio D."/>
            <person name="Gale L.R."/>
            <person name="Gnerre S."/>
            <person name="Goswami R.S."/>
            <person name="Hammond-Kosack K."/>
            <person name="Harris L.J."/>
            <person name="Hilburn K."/>
            <person name="Kennell J.C."/>
            <person name="Kroken S."/>
            <person name="Magnuson J.K."/>
            <person name="Mannhaupt G."/>
            <person name="Mauceli E.W."/>
            <person name="Mewes H.-W."/>
            <person name="Mitterbauer R."/>
            <person name="Muehlbauer G."/>
            <person name="Muensterkoetter M."/>
            <person name="Nelson D."/>
            <person name="O'Donnell K."/>
            <person name="Ouellet T."/>
            <person name="Qi W."/>
            <person name="Quesneville H."/>
            <person name="Roncero M.I.G."/>
            <person name="Seong K.-Y."/>
            <person name="Tetko I.V."/>
            <person name="Urban M."/>
            <person name="Waalwijk C."/>
            <person name="Ward T.J."/>
            <person name="Yao J."/>
            <person name="Birren B.W."/>
            <person name="Kistler H.C."/>
        </authorList>
    </citation>
    <scope>NUCLEOTIDE SEQUENCE [LARGE SCALE GENOMIC DNA]</scope>
    <source>
        <strain>ATCC MYA-4620 / CBS 123657 / FGSC 9075 / NRRL 31084 / PH-1</strain>
    </source>
</reference>
<reference key="2">
    <citation type="journal article" date="2010" name="Nature">
        <title>Comparative genomics reveals mobile pathogenicity chromosomes in Fusarium.</title>
        <authorList>
            <person name="Ma L.-J."/>
            <person name="van der Does H.C."/>
            <person name="Borkovich K.A."/>
            <person name="Coleman J.J."/>
            <person name="Daboussi M.-J."/>
            <person name="Di Pietro A."/>
            <person name="Dufresne M."/>
            <person name="Freitag M."/>
            <person name="Grabherr M."/>
            <person name="Henrissat B."/>
            <person name="Houterman P.M."/>
            <person name="Kang S."/>
            <person name="Shim W.-B."/>
            <person name="Woloshuk C."/>
            <person name="Xie X."/>
            <person name="Xu J.-R."/>
            <person name="Antoniw J."/>
            <person name="Baker S.E."/>
            <person name="Bluhm B.H."/>
            <person name="Breakspear A."/>
            <person name="Brown D.W."/>
            <person name="Butchko R.A.E."/>
            <person name="Chapman S."/>
            <person name="Coulson R."/>
            <person name="Coutinho P.M."/>
            <person name="Danchin E.G.J."/>
            <person name="Diener A."/>
            <person name="Gale L.R."/>
            <person name="Gardiner D.M."/>
            <person name="Goff S."/>
            <person name="Hammond-Kosack K.E."/>
            <person name="Hilburn K."/>
            <person name="Hua-Van A."/>
            <person name="Jonkers W."/>
            <person name="Kazan K."/>
            <person name="Kodira C.D."/>
            <person name="Koehrsen M."/>
            <person name="Kumar L."/>
            <person name="Lee Y.-H."/>
            <person name="Li L."/>
            <person name="Manners J.M."/>
            <person name="Miranda-Saavedra D."/>
            <person name="Mukherjee M."/>
            <person name="Park G."/>
            <person name="Park J."/>
            <person name="Park S.-Y."/>
            <person name="Proctor R.H."/>
            <person name="Regev A."/>
            <person name="Ruiz-Roldan M.C."/>
            <person name="Sain D."/>
            <person name="Sakthikumar S."/>
            <person name="Sykes S."/>
            <person name="Schwartz D.C."/>
            <person name="Turgeon B.G."/>
            <person name="Wapinski I."/>
            <person name="Yoder O."/>
            <person name="Young S."/>
            <person name="Zeng Q."/>
            <person name="Zhou S."/>
            <person name="Galagan J."/>
            <person name="Cuomo C.A."/>
            <person name="Kistler H.C."/>
            <person name="Rep M."/>
        </authorList>
    </citation>
    <scope>GENOME REANNOTATION</scope>
    <source>
        <strain>ATCC MYA-4620 / CBS 123657 / FGSC 9075 / NRRL 31084 / PH-1</strain>
    </source>
</reference>
<reference key="3">
    <citation type="journal article" date="2015" name="BMC Genomics">
        <title>The completed genome sequence of the pathogenic ascomycete fungus Fusarium graminearum.</title>
        <authorList>
            <person name="King R."/>
            <person name="Urban M."/>
            <person name="Hammond-Kosack M.C.U."/>
            <person name="Hassani-Pak K."/>
            <person name="Hammond-Kosack K.E."/>
        </authorList>
    </citation>
    <scope>NUCLEOTIDE SEQUENCE [LARGE SCALE GENOMIC DNA]</scope>
    <source>
        <strain>ATCC MYA-4620 / CBS 123657 / FGSC 9075 / NRRL 31084 / PH-1</strain>
    </source>
</reference>
<gene>
    <name type="primary">SWC5</name>
    <name type="ORF">FGRRES_07308</name>
    <name type="ORF">FGSG_07308</name>
</gene>
<proteinExistence type="inferred from homology"/>
<feature type="chain" id="PRO_0000212507" description="SWR1-complex protein 5">
    <location>
        <begin position="1"/>
        <end position="327"/>
    </location>
</feature>
<feature type="domain" description="BCNT-C" evidence="2">
    <location>
        <begin position="247"/>
        <end position="327"/>
    </location>
</feature>
<feature type="region of interest" description="Disordered" evidence="3">
    <location>
        <begin position="1"/>
        <end position="122"/>
    </location>
</feature>
<feature type="region of interest" description="Disordered" evidence="3">
    <location>
        <begin position="136"/>
        <end position="174"/>
    </location>
</feature>
<feature type="region of interest" description="Disordered" evidence="3">
    <location>
        <begin position="210"/>
        <end position="230"/>
    </location>
</feature>
<feature type="compositionally biased region" description="Acidic residues" evidence="3">
    <location>
        <begin position="1"/>
        <end position="23"/>
    </location>
</feature>
<feature type="compositionally biased region" description="Basic and acidic residues" evidence="3">
    <location>
        <begin position="106"/>
        <end position="115"/>
    </location>
</feature>
<protein>
    <recommendedName>
        <fullName>SWR1-complex protein 5</fullName>
    </recommendedName>
</protein>
<name>SWC5_GIBZE</name>
<comment type="function">
    <text evidence="1">Component of the SWR1 complex which mediates the ATP-dependent exchange of histone H2A for the H2A variant HZT1 leading to transcriptional regulation of selected genes by chromatin remodeling. Involved in chromosome stability (By similarity).</text>
</comment>
<comment type="subunit">
    <text evidence="1">Component of the SWR1 chromatin remodeling complex.</text>
</comment>
<comment type="subcellular location">
    <subcellularLocation>
        <location evidence="1">Nucleus</location>
    </subcellularLocation>
</comment>
<comment type="similarity">
    <text evidence="4">Belongs to the SWC5 family.</text>
</comment>
<dbReference type="EMBL" id="DS231666">
    <property type="protein sequence ID" value="ESU13547.1"/>
    <property type="molecule type" value="Genomic_DNA"/>
</dbReference>
<dbReference type="EMBL" id="HG970335">
    <property type="protein sequence ID" value="CEF85237.1"/>
    <property type="molecule type" value="Genomic_DNA"/>
</dbReference>
<dbReference type="RefSeq" id="XP_011327054.1">
    <property type="nucleotide sequence ID" value="XM_011328752.1"/>
</dbReference>
<dbReference type="SMR" id="Q4I650"/>
<dbReference type="FunCoup" id="Q4I650">
    <property type="interactions" value="448"/>
</dbReference>
<dbReference type="STRING" id="229533.Q4I650"/>
<dbReference type="GeneID" id="23554393"/>
<dbReference type="KEGG" id="fgr:FGSG_07308"/>
<dbReference type="VEuPathDB" id="FungiDB:FGRAMPH1_01G24481"/>
<dbReference type="eggNOG" id="KOG4776">
    <property type="taxonomic scope" value="Eukaryota"/>
</dbReference>
<dbReference type="HOGENOM" id="CLU_062474_0_0_1"/>
<dbReference type="InParanoid" id="Q4I650"/>
<dbReference type="OrthoDB" id="119928at110618"/>
<dbReference type="Proteomes" id="UP000070720">
    <property type="component" value="Chromosome 4"/>
</dbReference>
<dbReference type="GO" id="GO:0000812">
    <property type="term" value="C:Swr1 complex"/>
    <property type="evidence" value="ECO:0007669"/>
    <property type="project" value="TreeGrafter"/>
</dbReference>
<dbReference type="GO" id="GO:0006325">
    <property type="term" value="P:chromatin organization"/>
    <property type="evidence" value="ECO:0007669"/>
    <property type="project" value="UniProtKB-KW"/>
</dbReference>
<dbReference type="InterPro" id="IPR011421">
    <property type="entry name" value="BCNT-C"/>
</dbReference>
<dbReference type="InterPro" id="IPR027124">
    <property type="entry name" value="Swc5/CFDP1/2"/>
</dbReference>
<dbReference type="PANTHER" id="PTHR48407">
    <property type="entry name" value="CRANIOFACIAL DEVELOPMENT PROTEIN 1"/>
    <property type="match status" value="1"/>
</dbReference>
<dbReference type="PANTHER" id="PTHR48407:SF1">
    <property type="entry name" value="CRANIOFACIAL DEVELOPMENT PROTEIN 1"/>
    <property type="match status" value="1"/>
</dbReference>
<dbReference type="Pfam" id="PF07572">
    <property type="entry name" value="BCNT"/>
    <property type="match status" value="1"/>
</dbReference>
<dbReference type="PROSITE" id="PS51279">
    <property type="entry name" value="BCNT_C"/>
    <property type="match status" value="1"/>
</dbReference>
<organism>
    <name type="scientific">Gibberella zeae (strain ATCC MYA-4620 / CBS 123657 / FGSC 9075 / NRRL 31084 / PH-1)</name>
    <name type="common">Wheat head blight fungus</name>
    <name type="synonym">Fusarium graminearum</name>
    <dbReference type="NCBI Taxonomy" id="229533"/>
    <lineage>
        <taxon>Eukaryota</taxon>
        <taxon>Fungi</taxon>
        <taxon>Dikarya</taxon>
        <taxon>Ascomycota</taxon>
        <taxon>Pezizomycotina</taxon>
        <taxon>Sordariomycetes</taxon>
        <taxon>Hypocreomycetidae</taxon>
        <taxon>Hypocreales</taxon>
        <taxon>Nectriaceae</taxon>
        <taxon>Fusarium</taxon>
    </lineage>
</organism>
<sequence>MPPDPLLDEDEQYASSEDSDFAPDDAPNQASDQSDVEDEKDDGDKSTNKRSRPAADEGAADAGYDNSGDEAIIKRGEKRRKKTQTRGVNEDEDGGEGGLIKTRRQRAAEKEERKYATNNEPVTIDVDALWAQMISKTPVPGTKVDEPTDTDTNTDPTNKKVASAVQAAGSTDSDDASAMIRIKRTYNFAGRVHTEEKLVARDSAEAKLYLASQGDVPPTEGPEKRATRKAFRSAFEPQVDLMPQRSDLNLGMAARIKAGKEVQAKKLNVVDKSRMDWAGYVDKEGIKDELALAGKSKDSYMAREDFLAKSEAMRDEDSRRARLAGKV</sequence>